<comment type="function">
    <text evidence="4">Plays a role in myelin formation.</text>
</comment>
<comment type="subcellular location">
    <subcellularLocation>
        <location evidence="1">Cell membrane</location>
        <topology evidence="1">Single-pass type I membrane protein</topology>
    </subcellularLocation>
    <text evidence="4">Localized mainly in the Schmidt-Lanterman incisures and paranodes of noncompact peripheral nerve myelin.</text>
</comment>
<comment type="tissue specificity">
    <text evidence="4">Expressed in the peripheral nervous system Schwann cells (at protein level).</text>
</comment>
<comment type="induction">
    <text evidence="4">Up-regulated in Schwann cells by EGR2 during nerve development and after nerve injury.</text>
</comment>
<comment type="PTM">
    <text evidence="1">Glycosylated.</text>
</comment>
<reference key="1">
    <citation type="submission" date="2003-04" db="EMBL/GenBank/DDBJ databases">
        <title>Amgen rat EST program.</title>
        <authorList>
            <consortium name="Amgen EST program"/>
        </authorList>
    </citation>
    <scope>NUCLEOTIDE SEQUENCE [LARGE SCALE MRNA]</scope>
</reference>
<reference key="2">
    <citation type="journal article" date="2004" name="Nature">
        <title>Genome sequence of the Brown Norway rat yields insights into mammalian evolution.</title>
        <authorList>
            <person name="Gibbs R.A."/>
            <person name="Weinstock G.M."/>
            <person name="Metzker M.L."/>
            <person name="Muzny D.M."/>
            <person name="Sodergren E.J."/>
            <person name="Scherer S."/>
            <person name="Scott G."/>
            <person name="Steffen D."/>
            <person name="Worley K.C."/>
            <person name="Burch P.E."/>
            <person name="Okwuonu G."/>
            <person name="Hines S."/>
            <person name="Lewis L."/>
            <person name="Deramo C."/>
            <person name="Delgado O."/>
            <person name="Dugan-Rocha S."/>
            <person name="Miner G."/>
            <person name="Morgan M."/>
            <person name="Hawes A."/>
            <person name="Gill R."/>
            <person name="Holt R.A."/>
            <person name="Adams M.D."/>
            <person name="Amanatides P.G."/>
            <person name="Baden-Tillson H."/>
            <person name="Barnstead M."/>
            <person name="Chin S."/>
            <person name="Evans C.A."/>
            <person name="Ferriera S."/>
            <person name="Fosler C."/>
            <person name="Glodek A."/>
            <person name="Gu Z."/>
            <person name="Jennings D."/>
            <person name="Kraft C.L."/>
            <person name="Nguyen T."/>
            <person name="Pfannkoch C.M."/>
            <person name="Sitter C."/>
            <person name="Sutton G.G."/>
            <person name="Venter J.C."/>
            <person name="Woodage T."/>
            <person name="Smith D."/>
            <person name="Lee H.-M."/>
            <person name="Gustafson E."/>
            <person name="Cahill P."/>
            <person name="Kana A."/>
            <person name="Doucette-Stamm L."/>
            <person name="Weinstock K."/>
            <person name="Fechtel K."/>
            <person name="Weiss R.B."/>
            <person name="Dunn D.M."/>
            <person name="Green E.D."/>
            <person name="Blakesley R.W."/>
            <person name="Bouffard G.G."/>
            <person name="De Jong P.J."/>
            <person name="Osoegawa K."/>
            <person name="Zhu B."/>
            <person name="Marra M."/>
            <person name="Schein J."/>
            <person name="Bosdet I."/>
            <person name="Fjell C."/>
            <person name="Jones S."/>
            <person name="Krzywinski M."/>
            <person name="Mathewson C."/>
            <person name="Siddiqui A."/>
            <person name="Wye N."/>
            <person name="McPherson J."/>
            <person name="Zhao S."/>
            <person name="Fraser C.M."/>
            <person name="Shetty J."/>
            <person name="Shatsman S."/>
            <person name="Geer K."/>
            <person name="Chen Y."/>
            <person name="Abramzon S."/>
            <person name="Nierman W.C."/>
            <person name="Havlak P.H."/>
            <person name="Chen R."/>
            <person name="Durbin K.J."/>
            <person name="Egan A."/>
            <person name="Ren Y."/>
            <person name="Song X.-Z."/>
            <person name="Li B."/>
            <person name="Liu Y."/>
            <person name="Qin X."/>
            <person name="Cawley S."/>
            <person name="Cooney A.J."/>
            <person name="D'Souza L.M."/>
            <person name="Martin K."/>
            <person name="Wu J.Q."/>
            <person name="Gonzalez-Garay M.L."/>
            <person name="Jackson A.R."/>
            <person name="Kalafus K.J."/>
            <person name="McLeod M.P."/>
            <person name="Milosavljevic A."/>
            <person name="Virk D."/>
            <person name="Volkov A."/>
            <person name="Wheeler D.A."/>
            <person name="Zhang Z."/>
            <person name="Bailey J.A."/>
            <person name="Eichler E.E."/>
            <person name="Tuzun E."/>
            <person name="Birney E."/>
            <person name="Mongin E."/>
            <person name="Ureta-Vidal A."/>
            <person name="Woodwark C."/>
            <person name="Zdobnov E."/>
            <person name="Bork P."/>
            <person name="Suyama M."/>
            <person name="Torrents D."/>
            <person name="Alexandersson M."/>
            <person name="Trask B.J."/>
            <person name="Young J.M."/>
            <person name="Huang H."/>
            <person name="Wang H."/>
            <person name="Xing H."/>
            <person name="Daniels S."/>
            <person name="Gietzen D."/>
            <person name="Schmidt J."/>
            <person name="Stevens K."/>
            <person name="Vitt U."/>
            <person name="Wingrove J."/>
            <person name="Camara F."/>
            <person name="Mar Alba M."/>
            <person name="Abril J.F."/>
            <person name="Guigo R."/>
            <person name="Smit A."/>
            <person name="Dubchak I."/>
            <person name="Rubin E.M."/>
            <person name="Couronne O."/>
            <person name="Poliakov A."/>
            <person name="Huebner N."/>
            <person name="Ganten D."/>
            <person name="Goesele C."/>
            <person name="Hummel O."/>
            <person name="Kreitler T."/>
            <person name="Lee Y.-A."/>
            <person name="Monti J."/>
            <person name="Schulz H."/>
            <person name="Zimdahl H."/>
            <person name="Himmelbauer H."/>
            <person name="Lehrach H."/>
            <person name="Jacob H.J."/>
            <person name="Bromberg S."/>
            <person name="Gullings-Handley J."/>
            <person name="Jensen-Seaman M.I."/>
            <person name="Kwitek A.E."/>
            <person name="Lazar J."/>
            <person name="Pasko D."/>
            <person name="Tonellato P.J."/>
            <person name="Twigger S."/>
            <person name="Ponting C.P."/>
            <person name="Duarte J.M."/>
            <person name="Rice S."/>
            <person name="Goodstadt L."/>
            <person name="Beatson S.A."/>
            <person name="Emes R.D."/>
            <person name="Winter E.E."/>
            <person name="Webber C."/>
            <person name="Brandt P."/>
            <person name="Nyakatura G."/>
            <person name="Adetobi M."/>
            <person name="Chiaromonte F."/>
            <person name="Elnitski L."/>
            <person name="Eswara P."/>
            <person name="Hardison R.C."/>
            <person name="Hou M."/>
            <person name="Kolbe D."/>
            <person name="Makova K."/>
            <person name="Miller W."/>
            <person name="Nekrutenko A."/>
            <person name="Riemer C."/>
            <person name="Schwartz S."/>
            <person name="Taylor J."/>
            <person name="Yang S."/>
            <person name="Zhang Y."/>
            <person name="Lindpaintner K."/>
            <person name="Andrews T.D."/>
            <person name="Caccamo M."/>
            <person name="Clamp M."/>
            <person name="Clarke L."/>
            <person name="Curwen V."/>
            <person name="Durbin R.M."/>
            <person name="Eyras E."/>
            <person name="Searle S.M."/>
            <person name="Cooper G.M."/>
            <person name="Batzoglou S."/>
            <person name="Brudno M."/>
            <person name="Sidow A."/>
            <person name="Stone E.A."/>
            <person name="Payseur B.A."/>
            <person name="Bourque G."/>
            <person name="Lopez-Otin C."/>
            <person name="Puente X.S."/>
            <person name="Chakrabarti K."/>
            <person name="Chatterji S."/>
            <person name="Dewey C."/>
            <person name="Pachter L."/>
            <person name="Bray N."/>
            <person name="Yap V.B."/>
            <person name="Caspi A."/>
            <person name="Tesler G."/>
            <person name="Pevzner P.A."/>
            <person name="Haussler D."/>
            <person name="Roskin K.M."/>
            <person name="Baertsch R."/>
            <person name="Clawson H."/>
            <person name="Furey T.S."/>
            <person name="Hinrichs A.S."/>
            <person name="Karolchik D."/>
            <person name="Kent W.J."/>
            <person name="Rosenbloom K.R."/>
            <person name="Trumbower H."/>
            <person name="Weirauch M."/>
            <person name="Cooper D.N."/>
            <person name="Stenson P.D."/>
            <person name="Ma B."/>
            <person name="Brent M."/>
            <person name="Arumugam M."/>
            <person name="Shteynberg D."/>
            <person name="Copley R.R."/>
            <person name="Taylor M.S."/>
            <person name="Riethman H."/>
            <person name="Mudunuri U."/>
            <person name="Peterson J."/>
            <person name="Guyer M."/>
            <person name="Felsenfeld A."/>
            <person name="Old S."/>
            <person name="Mockrin S."/>
            <person name="Collins F.S."/>
        </authorList>
    </citation>
    <scope>NUCLEOTIDE SEQUENCE [LARGE SCALE GENOMIC DNA]</scope>
    <source>
        <strain>Brown Norway</strain>
    </source>
</reference>
<reference key="3">
    <citation type="journal article" date="2008" name="J. Neurosci.">
        <title>Analysis of peripheral nerve expression profiles identifies a novel myelin glycoprotein, MP11.</title>
        <authorList>
            <person name="Ryu E.J."/>
            <person name="Yang M."/>
            <person name="Gustin J.A."/>
            <person name="Chang L.W."/>
            <person name="Freimuth R.R."/>
            <person name="Nagarajan R."/>
            <person name="Milbrandt J."/>
        </authorList>
    </citation>
    <scope>FUNCTION</scope>
    <scope>SUBCELLULAR LOCATION</scope>
    <scope>INDUCTION</scope>
    <scope>TISSUE SPECIFICITY</scope>
</reference>
<evidence type="ECO:0000250" key="1"/>
<evidence type="ECO:0000255" key="2"/>
<evidence type="ECO:0000256" key="3">
    <source>
        <dbReference type="SAM" id="MobiDB-lite"/>
    </source>
</evidence>
<evidence type="ECO:0000269" key="4">
    <source>
    </source>
</evidence>
<gene>
    <name type="primary">Ncmap</name>
</gene>
<organism>
    <name type="scientific">Rattus norvegicus</name>
    <name type="common">Rat</name>
    <dbReference type="NCBI Taxonomy" id="10116"/>
    <lineage>
        <taxon>Eukaryota</taxon>
        <taxon>Metazoa</taxon>
        <taxon>Chordata</taxon>
        <taxon>Craniata</taxon>
        <taxon>Vertebrata</taxon>
        <taxon>Euteleostomi</taxon>
        <taxon>Mammalia</taxon>
        <taxon>Eutheria</taxon>
        <taxon>Euarchontoglires</taxon>
        <taxon>Glires</taxon>
        <taxon>Rodentia</taxon>
        <taxon>Myomorpha</taxon>
        <taxon>Muroidea</taxon>
        <taxon>Muridae</taxon>
        <taxon>Murinae</taxon>
        <taxon>Rattus</taxon>
    </lineage>
</organism>
<sequence>MTTATTLGDAVFSLNMTRGEDILYKSSGAIVAAIVVVVVIIVTLVLILLKMYNRRMRTRRELEPKSPKPPVPPALDPNSNGSQQPAAVTSDPADVPVETR</sequence>
<name>NCMAP_RAT</name>
<protein>
    <recommendedName>
        <fullName>Noncompact myelin-associated protein</fullName>
    </recommendedName>
    <alternativeName>
        <fullName>Myelin protein of 11 kDa</fullName>
        <shortName>MP11</shortName>
    </alternativeName>
</protein>
<feature type="chain" id="PRO_0000419538" description="Noncompact myelin-associated protein">
    <location>
        <begin position="1"/>
        <end position="100"/>
    </location>
</feature>
<feature type="topological domain" description="Extracellular" evidence="2">
    <location>
        <begin position="1"/>
        <end position="28"/>
    </location>
</feature>
<feature type="transmembrane region" description="Helical" evidence="2">
    <location>
        <begin position="29"/>
        <end position="49"/>
    </location>
</feature>
<feature type="topological domain" description="Cytoplasmic" evidence="2">
    <location>
        <begin position="50"/>
        <end position="100"/>
    </location>
</feature>
<feature type="region of interest" description="Disordered" evidence="3">
    <location>
        <begin position="58"/>
        <end position="100"/>
    </location>
</feature>
<feature type="compositionally biased region" description="Polar residues" evidence="3">
    <location>
        <begin position="77"/>
        <end position="87"/>
    </location>
</feature>
<accession>F1M2Z5</accession>
<keyword id="KW-1003">Cell membrane</keyword>
<keyword id="KW-0325">Glycoprotein</keyword>
<keyword id="KW-0472">Membrane</keyword>
<keyword id="KW-1185">Reference proteome</keyword>
<keyword id="KW-0812">Transmembrane</keyword>
<keyword id="KW-1133">Transmembrane helix</keyword>
<dbReference type="EMBL" id="CB725228">
    <property type="status" value="NOT_ANNOTATED_CDS"/>
    <property type="molecule type" value="mRNA"/>
</dbReference>
<dbReference type="EMBL" id="AABR06040402">
    <property type="status" value="NOT_ANNOTATED_CDS"/>
    <property type="molecule type" value="Genomic_DNA"/>
</dbReference>
<dbReference type="EMBL" id="AABR06040403">
    <property type="status" value="NOT_ANNOTATED_CDS"/>
    <property type="molecule type" value="Genomic_DNA"/>
</dbReference>
<dbReference type="RefSeq" id="NP_001240847.1">
    <property type="nucleotide sequence ID" value="NM_001253918.1"/>
</dbReference>
<dbReference type="RefSeq" id="XP_038966727.1">
    <property type="nucleotide sequence ID" value="XM_039110799.2"/>
</dbReference>
<dbReference type="RefSeq" id="XP_038966728.1">
    <property type="nucleotide sequence ID" value="XM_039110800.2"/>
</dbReference>
<dbReference type="RefSeq" id="XP_038966729.1">
    <property type="nucleotide sequence ID" value="XM_039110801.2"/>
</dbReference>
<dbReference type="RefSeq" id="XP_038966730.1">
    <property type="nucleotide sequence ID" value="XM_039110802.2"/>
</dbReference>
<dbReference type="RefSeq" id="XP_063144514.1">
    <property type="nucleotide sequence ID" value="XM_063288444.1"/>
</dbReference>
<dbReference type="RefSeq" id="XP_063144515.1">
    <property type="nucleotide sequence ID" value="XM_063288445.1"/>
</dbReference>
<dbReference type="SMR" id="F1M2Z5"/>
<dbReference type="FunCoup" id="F1M2Z5">
    <property type="interactions" value="23"/>
</dbReference>
<dbReference type="STRING" id="10116.ENSRNOP00000064011"/>
<dbReference type="PaxDb" id="10116-ENSRNOP00000064011"/>
<dbReference type="Ensembl" id="ENSRNOT00000073506.3">
    <property type="protein sequence ID" value="ENSRNOP00000064011.3"/>
    <property type="gene ID" value="ENSRNOG00000048139.3"/>
</dbReference>
<dbReference type="GeneID" id="689826"/>
<dbReference type="KEGG" id="rno:689826"/>
<dbReference type="AGR" id="RGD:1587554"/>
<dbReference type="CTD" id="400746"/>
<dbReference type="RGD" id="1587554">
    <property type="gene designation" value="Ncmap"/>
</dbReference>
<dbReference type="eggNOG" id="ENOG502S4WJ">
    <property type="taxonomic scope" value="Eukaryota"/>
</dbReference>
<dbReference type="InParanoid" id="F1M2Z5"/>
<dbReference type="OMA" id="YNRKMRI"/>
<dbReference type="PRO" id="PR:F1M2Z5"/>
<dbReference type="Proteomes" id="UP000002494">
    <property type="component" value="Chromosome 5"/>
</dbReference>
<dbReference type="GO" id="GO:0033270">
    <property type="term" value="C:paranode region of axon"/>
    <property type="evidence" value="ECO:0000314"/>
    <property type="project" value="UniProtKB"/>
</dbReference>
<dbReference type="GO" id="GO:0005886">
    <property type="term" value="C:plasma membrane"/>
    <property type="evidence" value="ECO:0000250"/>
    <property type="project" value="UniProtKB"/>
</dbReference>
<dbReference type="GO" id="GO:0043220">
    <property type="term" value="C:Schmidt-Lanterman incisure"/>
    <property type="evidence" value="ECO:0000314"/>
    <property type="project" value="UniProtKB"/>
</dbReference>
<dbReference type="GO" id="GO:0019911">
    <property type="term" value="F:structural constituent of myelin sheath"/>
    <property type="evidence" value="ECO:0000314"/>
    <property type="project" value="UniProtKB"/>
</dbReference>
<dbReference type="GO" id="GO:0032290">
    <property type="term" value="P:peripheral nervous system myelin formation"/>
    <property type="evidence" value="ECO:0000314"/>
    <property type="project" value="UniProtKB"/>
</dbReference>
<dbReference type="GO" id="GO:0031643">
    <property type="term" value="P:positive regulation of myelination"/>
    <property type="evidence" value="ECO:0000314"/>
    <property type="project" value="UniProtKB"/>
</dbReference>
<dbReference type="InterPro" id="IPR038940">
    <property type="entry name" value="NCMAP"/>
</dbReference>
<dbReference type="PANTHER" id="PTHR35974">
    <property type="entry name" value="NONCOMPACT MYELIN-ASSOCIATED PROTEIN"/>
    <property type="match status" value="1"/>
</dbReference>
<dbReference type="PANTHER" id="PTHR35974:SF1">
    <property type="entry name" value="NONCOMPACT MYELIN-ASSOCIATED PROTEIN"/>
    <property type="match status" value="1"/>
</dbReference>
<proteinExistence type="evidence at protein level"/>